<feature type="signal peptide" evidence="2">
    <location>
        <begin position="1"/>
        <end position="22"/>
    </location>
</feature>
<feature type="propeptide" id="PRO_0000446746" evidence="4">
    <location>
        <begin position="23"/>
        <end position="94"/>
    </location>
</feature>
<feature type="peptide" id="PRO_5001524793" description="U-scoloptoxin-Er5e" evidence="1">
    <location>
        <begin position="95"/>
        <end position="111"/>
    </location>
</feature>
<feature type="propeptide" id="PRO_0000446747" evidence="4">
    <location>
        <begin position="112"/>
        <end position="131"/>
    </location>
</feature>
<feature type="repeat" description="RLWRNWE 1" evidence="4">
    <location>
        <begin position="34"/>
        <end position="40"/>
    </location>
</feature>
<feature type="repeat" description="RLWRNWE 2" evidence="4">
    <location>
        <begin position="61"/>
        <end position="67"/>
    </location>
</feature>
<feature type="repeat" description="RLWRNWE 3" evidence="4">
    <location>
        <begin position="86"/>
        <end position="92"/>
    </location>
</feature>
<feature type="repeat" description="RLWRNWE 4; approximate" evidence="4">
    <location>
        <begin position="107"/>
        <end position="113"/>
    </location>
</feature>
<feature type="modified residue" description="Pyrrolidone carboxylic acid" evidence="1">
    <location>
        <position position="95"/>
    </location>
</feature>
<comment type="subcellular location">
    <subcellularLocation>
        <location evidence="4">Secreted</location>
    </subcellularLocation>
</comment>
<comment type="tissue specificity">
    <text evidence="4">Expressed by the venom gland.</text>
</comment>
<comment type="similarity">
    <text evidence="3">Belongs to the scoloptoxin-08 family.</text>
</comment>
<keyword id="KW-0165">Cleavage on pair of basic residues</keyword>
<keyword id="KW-0873">Pyrrolidone carboxylic acid</keyword>
<keyword id="KW-0677">Repeat</keyword>
<keyword id="KW-0964">Secreted</keyword>
<keyword id="KW-0732">Signal</keyword>
<keyword id="KW-0800">Toxin</keyword>
<sequence length="131" mass="16301">MKTNCEFPLLCLLIVLVANVEGEVEDNELKMVKRLWRNWEDPEQRQLLDQEAEQEKQREKRLWRNWEDLELRQLLNEFAENQREKRLWRNWERRQVANEDDGEKPKELWRNWEDLKRRQVVDLNDEQKTTG</sequence>
<protein>
    <recommendedName>
        <fullName evidence="3">U-scoloptoxin-Er5e</fullName>
        <shortName evidence="3">U-SLPTX-Er5e</shortName>
    </recommendedName>
    <alternativeName>
        <fullName evidence="5">U-scoloptoxin-Er5-like</fullName>
        <shortName>U-SLPTX-Er5-like</shortName>
    </alternativeName>
    <alternativeName>
        <fullName evidence="1">U-scoloptoxin-Er5.1c</fullName>
        <shortName evidence="1">U-SLPTX-Er5.1c</shortName>
    </alternativeName>
</protein>
<dbReference type="EMBL" id="KF130759">
    <property type="protein sequence ID" value="AHY22610.1"/>
    <property type="molecule type" value="mRNA"/>
</dbReference>
<dbReference type="SMR" id="A0A023W163"/>
<dbReference type="GO" id="GO:0005576">
    <property type="term" value="C:extracellular region"/>
    <property type="evidence" value="ECO:0007669"/>
    <property type="project" value="UniProtKB-SubCell"/>
</dbReference>
<dbReference type="GO" id="GO:0090729">
    <property type="term" value="F:toxin activity"/>
    <property type="evidence" value="ECO:0007669"/>
    <property type="project" value="UniProtKB-KW"/>
</dbReference>
<proteinExistence type="evidence at transcript level"/>
<name>TX85E_ETHRU</name>
<evidence type="ECO:0000250" key="1">
    <source>
        <dbReference type="UniProtKB" id="A0A023W0B6"/>
    </source>
</evidence>
<evidence type="ECO:0000255" key="2"/>
<evidence type="ECO:0000305" key="3"/>
<evidence type="ECO:0000305" key="4">
    <source>
    </source>
</evidence>
<evidence type="ECO:0000312" key="5">
    <source>
        <dbReference type="EMBL" id="AHY22610.1"/>
    </source>
</evidence>
<accession>A0A023W163</accession>
<organism>
    <name type="scientific">Ethmostigmus rubripes</name>
    <name type="common">Giant centipede</name>
    <dbReference type="NCBI Taxonomy" id="62613"/>
    <lineage>
        <taxon>Eukaryota</taxon>
        <taxon>Metazoa</taxon>
        <taxon>Ecdysozoa</taxon>
        <taxon>Arthropoda</taxon>
        <taxon>Myriapoda</taxon>
        <taxon>Chilopoda</taxon>
        <taxon>Pleurostigmophora</taxon>
        <taxon>Scolopendromorpha</taxon>
        <taxon>Scolopendridae</taxon>
        <taxon>Ethmostigmus</taxon>
    </lineage>
</organism>
<reference key="1">
    <citation type="journal article" date="2014" name="J. Proteomics">
        <title>Multifunctional warheads: diversification of the toxin arsenal of centipedes via novel multidomain transcripts.</title>
        <authorList>
            <person name="Undheim E.A."/>
            <person name="Sunagar K."/>
            <person name="Hamilton B.R."/>
            <person name="Jones A."/>
            <person name="Venter D.J."/>
            <person name="Fry B.G."/>
            <person name="King G.F."/>
        </authorList>
    </citation>
    <scope>NUCLEOTIDE SEQUENCE [MRNA]</scope>
    <source>
        <tissue>Venom gland</tissue>
    </source>
</reference>